<sequence length="170" mass="19795">MMAGMKIQLVCMLLLAFSSWSLCSDSEEEMKALEADFLTNMHTSKISKAHVPSWKMTLLNVCSLVNNLNSPAEETGEVHEEELVARRKLPTALDGFSLEAMLTIYQLHKICHSRAFQHWELIQEDILDTGNDKNGKEEVIKRKIPYILKRQLYENKPRRPYILKRDSYYY</sequence>
<proteinExistence type="evidence at protein level"/>
<protein>
    <recommendedName>
        <fullName>Neurotensin/neuromedin N</fullName>
    </recommendedName>
    <component>
        <recommendedName>
            <fullName>Large neuromedin N</fullName>
        </recommendedName>
        <alternativeName>
            <fullName>NmN-125</fullName>
        </alternativeName>
    </component>
    <component>
        <recommendedName>
            <fullName>Neuromedin N</fullName>
            <shortName>NN</shortName>
            <shortName>NmN</shortName>
        </recommendedName>
    </component>
    <component>
        <recommendedName>
            <fullName>Neurotensin</fullName>
            <shortName>NT</shortName>
        </recommendedName>
    </component>
    <component>
        <recommendedName>
            <fullName>Tail peptide</fullName>
        </recommendedName>
    </component>
</protein>
<accession>P30990</accession>
<keyword id="KW-0002">3D-structure</keyword>
<keyword id="KW-0165">Cleavage on pair of basic residues</keyword>
<keyword id="KW-0968">Cytoplasmic vesicle</keyword>
<keyword id="KW-1267">Proteomics identification</keyword>
<keyword id="KW-0873">Pyrrolidone carboxylic acid</keyword>
<keyword id="KW-1185">Reference proteome</keyword>
<keyword id="KW-0964">Secreted</keyword>
<keyword id="KW-0732">Signal</keyword>
<keyword id="KW-0838">Vasoactive</keyword>
<comment type="function">
    <text>Neurotensin may play an endocrine or paracrine role in the regulation of fat metabolism. It causes contraction of smooth muscle.</text>
</comment>
<comment type="subunit">
    <text evidence="2 3 4">Interacts with NTSR1 (PubMed:23140271). Interacts with SORT1 (PubMed:19122660). Interacts with SORL1 (PubMed:11294867).</text>
</comment>
<comment type="interaction">
    <interactant intactId="EBI-6655799">
        <id>P30990</id>
    </interactant>
    <interactant intactId="EBI-11956541">
        <id>Q9GZY8-5</id>
        <label>MFF</label>
    </interactant>
    <organismsDiffer>false</organismsDiffer>
    <experiments>3</experiments>
</comment>
<comment type="interaction">
    <interactant intactId="EBI-6655799">
        <id>P30990</id>
    </interactant>
    <interactant intactId="EBI-6655774">
        <id>P30989</id>
        <label>NTSR1</label>
    </interactant>
    <organismsDiffer>false</organismsDiffer>
    <experiments>2</experiments>
</comment>
<comment type="interaction">
    <interactant intactId="EBI-6655817">
        <id>PRO_0000019524</id>
    </interactant>
    <interactant intactId="EBI-7730807">
        <id>Q9BYF1</id>
        <label>ACE2</label>
    </interactant>
    <organismsDiffer>false</organismsDiffer>
    <experiments>2</experiments>
</comment>
<comment type="interaction">
    <interactant intactId="EBI-6655817">
        <id>PRO_0000019524</id>
    </interactant>
    <interactant intactId="EBI-6655774">
        <id>P30989</id>
        <label>NTSR1</label>
    </interactant>
    <organismsDiffer>false</organismsDiffer>
    <experiments>2</experiments>
</comment>
<comment type="subcellular location">
    <subcellularLocation>
        <location>Secreted</location>
    </subcellularLocation>
    <subcellularLocation>
        <location>Cytoplasmic vesicle</location>
        <location>Secretory vesicle</location>
    </subcellularLocation>
    <text>Packaged within secretory vesicles.</text>
</comment>
<comment type="PTM">
    <molecule>Neurotensin</molecule>
    <text evidence="5">Neurotensin is cleaved and degraded by Angiotensin-converting enzyme (ACE) and neprilysin (MME).</text>
</comment>
<comment type="similarity">
    <text evidence="6">Belongs to the neurotensin family.</text>
</comment>
<comment type="online information" name="Wikipedia">
    <link uri="https://en.wikipedia.org/wiki/Neurotensin"/>
    <text>Neurotensin entry</text>
</comment>
<feature type="signal peptide" evidence="1">
    <location>
        <begin position="1"/>
        <end position="23"/>
    </location>
</feature>
<feature type="chain" id="PRO_0000019522" description="Large neuromedin N">
    <location>
        <begin position="24"/>
        <end position="148"/>
    </location>
</feature>
<feature type="peptide" id="PRO_0000019523" description="Neuromedin N">
    <location>
        <begin position="144"/>
        <end position="148"/>
    </location>
</feature>
<feature type="peptide" id="PRO_0000019524" description="Neurotensin" evidence="7">
    <location>
        <begin position="151"/>
        <end position="163"/>
    </location>
</feature>
<feature type="peptide" id="PRO_0000019525" description="Tail peptide" evidence="1">
    <location>
        <begin position="166"/>
        <end position="170"/>
    </location>
</feature>
<feature type="site" description="Cleavage; by MME" evidence="5">
    <location>
        <begin position="160"/>
        <end position="161"/>
    </location>
</feature>
<feature type="site" description="Cleavage; by ACE and MME" evidence="5">
    <location>
        <begin position="161"/>
        <end position="162"/>
    </location>
</feature>
<feature type="modified residue" description="Pyrrolidone carboxylic acid" evidence="3">
    <location>
        <position position="151"/>
    </location>
</feature>
<feature type="strand" evidence="9">
    <location>
        <begin position="152"/>
        <end position="154"/>
    </location>
</feature>
<feature type="strand" evidence="8">
    <location>
        <begin position="156"/>
        <end position="159"/>
    </location>
</feature>
<gene>
    <name type="primary">NTS</name>
</gene>
<reference key="1">
    <citation type="journal article" date="1998" name="Am. J. Physiol.">
        <title>DNA methylation contributes to expression of the human neurotensin/neuromedin N gene.</title>
        <authorList>
            <person name="Dong Z."/>
            <person name="Wang X."/>
            <person name="Zhao Q."/>
            <person name="Townsend C.M. Jr."/>
            <person name="Evers B.M."/>
        </authorList>
    </citation>
    <scope>NUCLEOTIDE SEQUENCE [MRNA]</scope>
</reference>
<reference key="2">
    <citation type="journal article" date="2004" name="Genome Res.">
        <title>The status, quality, and expansion of the NIH full-length cDNA project: the Mammalian Gene Collection (MGC).</title>
        <authorList>
            <consortium name="The MGC Project Team"/>
        </authorList>
    </citation>
    <scope>NUCLEOTIDE SEQUENCE [LARGE SCALE MRNA]</scope>
    <source>
        <tissue>Brain</tissue>
    </source>
</reference>
<reference key="3">
    <citation type="journal article" date="1992" name="Neuroscience">
        <title>Cloning of human neurotensin/neuromedin N genomic sequences and expression in the ventral mesencephalon of schizophrenics and age/sex matched controls.</title>
        <authorList>
            <person name="Bean A.J."/>
            <person name="Dagerlind A."/>
            <person name="Hoekfelt T."/>
            <person name="Dobner P.R."/>
        </authorList>
    </citation>
    <scope>NUCLEOTIDE SEQUENCE [GENOMIC DNA] OF 1-120</scope>
</reference>
<reference key="4">
    <citation type="journal article" date="1984" name="Peptides">
        <title>Hydrolysis of substance p and neurotensin by converting enzyme and neutral endopeptidase.</title>
        <authorList>
            <person name="Skidgel R.A."/>
            <person name="Engelbrecht S."/>
            <person name="Johnson A.R."/>
            <person name="Erdoes E.G."/>
        </authorList>
    </citation>
    <scope>CLEAVAGE BY ACE AND MME</scope>
</reference>
<reference key="5">
    <citation type="journal article" date="2001" name="J. Biol. Chem.">
        <title>Activation and functional characterization of the mosaic receptor SorLA/LR11.</title>
        <authorList>
            <person name="Jacobsen L."/>
            <person name="Madsen P."/>
            <person name="Jacobsen C."/>
            <person name="Nielsen M.S."/>
            <person name="Gliemann J."/>
            <person name="Petersen C.M."/>
        </authorList>
    </citation>
    <scope>INTERACTION WITH SORL1</scope>
</reference>
<reference key="6">
    <citation type="journal article" date="2009" name="Nat. Struct. Mol. Biol.">
        <title>Ligands bind to Sortilin in the tunnel of a ten-bladed beta-propeller domain.</title>
        <authorList>
            <person name="Quistgaard E.M."/>
            <person name="Madsen P."/>
            <person name="Groftehauge M.K."/>
            <person name="Nissen P."/>
            <person name="Petersen C.M."/>
            <person name="Thirup S.S."/>
        </authorList>
    </citation>
    <scope>X-RAY CRYSTALLOGRAPHY (2.0 ANGSTROMS) OF 151-163 IN COMPLEX WITH SORT1</scope>
    <scope>INTERACTION WITH SORT1</scope>
    <scope>PYROGLUTAMATE FORMATION AT GLN-151</scope>
</reference>
<reference key="7">
    <citation type="journal article" date="2013" name="J. Biomol. Struct. Dyn.">
        <title>Intermolecular interactions between the neurotensin and the third extracellular loop of human neurotensin 1 receptor.</title>
        <authorList>
            <person name="Da Costa G."/>
            <person name="Bondon A."/>
            <person name="Coutant J."/>
            <person name="Curmi P."/>
            <person name="Monti J.P."/>
        </authorList>
    </citation>
    <scope>STRUCTURE BY NMR OF 152-163 IN COMPLEX WITH NTSR1</scope>
    <scope>SUBUNIT</scope>
</reference>
<dbReference type="EMBL" id="U91618">
    <property type="protein sequence ID" value="AAB50564.1"/>
    <property type="molecule type" value="mRNA"/>
</dbReference>
<dbReference type="EMBL" id="BC010918">
    <property type="protein sequence ID" value="AAH10918.1"/>
    <property type="molecule type" value="mRNA"/>
</dbReference>
<dbReference type="EMBL" id="S47339">
    <property type="protein sequence ID" value="AAB23934.1"/>
    <property type="molecule type" value="Genomic_DNA"/>
</dbReference>
<dbReference type="CCDS" id="CCDS9029.1"/>
<dbReference type="PIR" id="I58190">
    <property type="entry name" value="I58190"/>
</dbReference>
<dbReference type="RefSeq" id="NP_006174.1">
    <property type="nucleotide sequence ID" value="NM_006183.5"/>
</dbReference>
<dbReference type="PDB" id="2LNE">
    <property type="method" value="NMR"/>
    <property type="chains" value="A=152-163"/>
</dbReference>
<dbReference type="PDB" id="2LNF">
    <property type="method" value="NMR"/>
    <property type="chains" value="A=152-163"/>
</dbReference>
<dbReference type="PDB" id="2LNG">
    <property type="method" value="NMR"/>
    <property type="chains" value="A=152-163"/>
</dbReference>
<dbReference type="PDB" id="2LYW">
    <property type="method" value="NMR"/>
    <property type="chains" value="B=152-163"/>
</dbReference>
<dbReference type="PDB" id="2OYV">
    <property type="method" value="NMR"/>
    <property type="chains" value="A=152-163"/>
</dbReference>
<dbReference type="PDB" id="2OYW">
    <property type="method" value="NMR"/>
    <property type="chains" value="A=152-163"/>
</dbReference>
<dbReference type="PDB" id="3F6K">
    <property type="method" value="X-ray"/>
    <property type="resolution" value="2.00 A"/>
    <property type="chains" value="N=151-163"/>
</dbReference>
<dbReference type="PDB" id="4PO7">
    <property type="method" value="X-ray"/>
    <property type="resolution" value="2.66 A"/>
    <property type="chains" value="N/P=151-163"/>
</dbReference>
<dbReference type="PDB" id="5LUZ">
    <property type="method" value="X-ray"/>
    <property type="resolution" value="2.70 A"/>
    <property type="chains" value="C/D/P/Q=151-163"/>
</dbReference>
<dbReference type="PDB" id="6UP7">
    <property type="method" value="EM"/>
    <property type="resolution" value="4.20 A"/>
    <property type="chains" value="C=158-163"/>
</dbReference>
<dbReference type="PDB" id="8VJY">
    <property type="method" value="X-ray"/>
    <property type="resolution" value="1.95 A"/>
    <property type="chains" value="B/D=151-163"/>
</dbReference>
<dbReference type="PDBsum" id="2LNE"/>
<dbReference type="PDBsum" id="2LNF"/>
<dbReference type="PDBsum" id="2LNG"/>
<dbReference type="PDBsum" id="2LYW"/>
<dbReference type="PDBsum" id="2OYV"/>
<dbReference type="PDBsum" id="2OYW"/>
<dbReference type="PDBsum" id="3F6K"/>
<dbReference type="PDBsum" id="4PO7"/>
<dbReference type="PDBsum" id="5LUZ"/>
<dbReference type="PDBsum" id="6UP7"/>
<dbReference type="PDBsum" id="8VJY"/>
<dbReference type="BMRB" id="P30990"/>
<dbReference type="SMR" id="P30990"/>
<dbReference type="BioGRID" id="110976">
    <property type="interactions" value="7"/>
</dbReference>
<dbReference type="CORUM" id="P30990"/>
<dbReference type="DIP" id="DIP-60978N"/>
<dbReference type="FunCoup" id="P30990">
    <property type="interactions" value="424"/>
</dbReference>
<dbReference type="IntAct" id="P30990">
    <property type="interactions" value="6"/>
</dbReference>
<dbReference type="STRING" id="9606.ENSP00000256010"/>
<dbReference type="BindingDB" id="P30990"/>
<dbReference type="iPTMnet" id="P30990"/>
<dbReference type="PhosphoSitePlus" id="P30990"/>
<dbReference type="BioMuta" id="NTS"/>
<dbReference type="DMDM" id="2828196"/>
<dbReference type="jPOST" id="P30990"/>
<dbReference type="MassIVE" id="P30990"/>
<dbReference type="PaxDb" id="9606-ENSP00000256010"/>
<dbReference type="PeptideAtlas" id="P30990"/>
<dbReference type="ProteomicsDB" id="54756"/>
<dbReference type="Antibodypedia" id="29877">
    <property type="antibodies" value="289 antibodies from 27 providers"/>
</dbReference>
<dbReference type="DNASU" id="4922"/>
<dbReference type="Ensembl" id="ENST00000256010.7">
    <property type="protein sequence ID" value="ENSP00000256010.5"/>
    <property type="gene ID" value="ENSG00000133636.11"/>
</dbReference>
<dbReference type="GeneID" id="4922"/>
<dbReference type="KEGG" id="hsa:4922"/>
<dbReference type="MANE-Select" id="ENST00000256010.7">
    <property type="protein sequence ID" value="ENSP00000256010.5"/>
    <property type="RefSeq nucleotide sequence ID" value="NM_006183.5"/>
    <property type="RefSeq protein sequence ID" value="NP_006174.1"/>
</dbReference>
<dbReference type="AGR" id="HGNC:8038"/>
<dbReference type="CTD" id="4922"/>
<dbReference type="DisGeNET" id="4922"/>
<dbReference type="GeneCards" id="NTS"/>
<dbReference type="HGNC" id="HGNC:8038">
    <property type="gene designation" value="NTS"/>
</dbReference>
<dbReference type="HPA" id="ENSG00000133636">
    <property type="expression patterns" value="Tissue enriched (intestine)"/>
</dbReference>
<dbReference type="MIM" id="162650">
    <property type="type" value="gene"/>
</dbReference>
<dbReference type="neXtProt" id="NX_P30990"/>
<dbReference type="OpenTargets" id="ENSG00000133636"/>
<dbReference type="PharmGKB" id="PA31820"/>
<dbReference type="VEuPathDB" id="HostDB:ENSG00000133636"/>
<dbReference type="eggNOG" id="ENOG502RYW6">
    <property type="taxonomic scope" value="Eukaryota"/>
</dbReference>
<dbReference type="GeneTree" id="ENSGT00640000091574"/>
<dbReference type="HOGENOM" id="CLU_133874_0_0_1"/>
<dbReference type="InParanoid" id="P30990"/>
<dbReference type="OMA" id="ISSWKMT"/>
<dbReference type="OrthoDB" id="9929102at2759"/>
<dbReference type="PAN-GO" id="P30990">
    <property type="GO annotations" value="1 GO annotation based on evolutionary models"/>
</dbReference>
<dbReference type="PhylomeDB" id="P30990"/>
<dbReference type="TreeFam" id="TF330765"/>
<dbReference type="PathwayCommons" id="P30990"/>
<dbReference type="Reactome" id="R-HSA-375276">
    <property type="pathway name" value="Peptide ligand-binding receptors"/>
</dbReference>
<dbReference type="Reactome" id="R-HSA-416476">
    <property type="pathway name" value="G alpha (q) signalling events"/>
</dbReference>
<dbReference type="SignaLink" id="P30990"/>
<dbReference type="SIGNOR" id="P30990"/>
<dbReference type="BioGRID-ORCS" id="4922">
    <property type="hits" value="10 hits in 1142 CRISPR screens"/>
</dbReference>
<dbReference type="ChiTaRS" id="NTS">
    <property type="organism name" value="human"/>
</dbReference>
<dbReference type="EvolutionaryTrace" id="P30990"/>
<dbReference type="GeneWiki" id="Neurotensin"/>
<dbReference type="GenomeRNAi" id="4922"/>
<dbReference type="Pharos" id="P30990">
    <property type="development level" value="Tbio"/>
</dbReference>
<dbReference type="PRO" id="PR:P30990"/>
<dbReference type="Proteomes" id="UP000005640">
    <property type="component" value="Chromosome 12"/>
</dbReference>
<dbReference type="RNAct" id="P30990">
    <property type="molecule type" value="protein"/>
</dbReference>
<dbReference type="Bgee" id="ENSG00000133636">
    <property type="expression patterns" value="Expressed in nasal cavity epithelium and 128 other cell types or tissues"/>
</dbReference>
<dbReference type="ExpressionAtlas" id="P30990">
    <property type="expression patterns" value="baseline and differential"/>
</dbReference>
<dbReference type="GO" id="GO:0043679">
    <property type="term" value="C:axon terminus"/>
    <property type="evidence" value="ECO:0000318"/>
    <property type="project" value="GO_Central"/>
</dbReference>
<dbReference type="GO" id="GO:0005576">
    <property type="term" value="C:extracellular region"/>
    <property type="evidence" value="ECO:0000304"/>
    <property type="project" value="Reactome"/>
</dbReference>
<dbReference type="GO" id="GO:0043231">
    <property type="term" value="C:intracellular membrane-bounded organelle"/>
    <property type="evidence" value="ECO:0000314"/>
    <property type="project" value="HPA"/>
</dbReference>
<dbReference type="GO" id="GO:0030133">
    <property type="term" value="C:transport vesicle"/>
    <property type="evidence" value="ECO:0007669"/>
    <property type="project" value="UniProtKB-SubCell"/>
</dbReference>
<dbReference type="GO" id="GO:0005184">
    <property type="term" value="F:neuropeptide hormone activity"/>
    <property type="evidence" value="ECO:0007669"/>
    <property type="project" value="InterPro"/>
</dbReference>
<dbReference type="GO" id="GO:0071855">
    <property type="term" value="F:neuropeptide receptor binding"/>
    <property type="evidence" value="ECO:0000353"/>
    <property type="project" value="UniProtKB"/>
</dbReference>
<dbReference type="GO" id="GO:0048018">
    <property type="term" value="F:receptor ligand activity"/>
    <property type="evidence" value="ECO:0000314"/>
    <property type="project" value="UniProtKB"/>
</dbReference>
<dbReference type="GO" id="GO:0097746">
    <property type="term" value="P:blood vessel diameter maintenance"/>
    <property type="evidence" value="ECO:0007669"/>
    <property type="project" value="UniProtKB-KW"/>
</dbReference>
<dbReference type="GO" id="GO:0010629">
    <property type="term" value="P:negative regulation of gene expression"/>
    <property type="evidence" value="ECO:0000314"/>
    <property type="project" value="ARUK-UCL"/>
</dbReference>
<dbReference type="GO" id="GO:0007218">
    <property type="term" value="P:neuropeptide signaling pathway"/>
    <property type="evidence" value="ECO:0000314"/>
    <property type="project" value="UniProtKB"/>
</dbReference>
<dbReference type="GO" id="GO:0010628">
    <property type="term" value="P:positive regulation of gene expression"/>
    <property type="evidence" value="ECO:0000314"/>
    <property type="project" value="ARUK-UCL"/>
</dbReference>
<dbReference type="GO" id="GO:0051897">
    <property type="term" value="P:positive regulation of phosphatidylinositol 3-kinase/protein kinase B signal transduction"/>
    <property type="evidence" value="ECO:0000314"/>
    <property type="project" value="ARUK-UCL"/>
</dbReference>
<dbReference type="GO" id="GO:0007165">
    <property type="term" value="P:signal transduction"/>
    <property type="evidence" value="ECO:0000303"/>
    <property type="project" value="ProtInc"/>
</dbReference>
<dbReference type="InterPro" id="IPR008055">
    <property type="entry name" value="NeurotensiN"/>
</dbReference>
<dbReference type="PANTHER" id="PTHR15356">
    <property type="entry name" value="NEUROTENSIN/NEUROMEDIN N"/>
    <property type="match status" value="1"/>
</dbReference>
<dbReference type="PANTHER" id="PTHR15356:SF0">
    <property type="entry name" value="NEUROTENSIN_NEUROMEDIN N"/>
    <property type="match status" value="1"/>
</dbReference>
<dbReference type="Pfam" id="PF07421">
    <property type="entry name" value="Pro-NT_NN"/>
    <property type="match status" value="1"/>
</dbReference>
<dbReference type="PRINTS" id="PR01668">
    <property type="entry name" value="NEUROTENSIN"/>
</dbReference>
<name>NEUT_HUMAN</name>
<evidence type="ECO:0000255" key="1"/>
<evidence type="ECO:0000269" key="2">
    <source>
    </source>
</evidence>
<evidence type="ECO:0000269" key="3">
    <source>
    </source>
</evidence>
<evidence type="ECO:0000269" key="4">
    <source>
    </source>
</evidence>
<evidence type="ECO:0000269" key="5">
    <source>
    </source>
</evidence>
<evidence type="ECO:0000305" key="6"/>
<evidence type="ECO:0000305" key="7">
    <source>
    </source>
</evidence>
<evidence type="ECO:0007829" key="8">
    <source>
        <dbReference type="PDB" id="2LNF"/>
    </source>
</evidence>
<evidence type="ECO:0007829" key="9">
    <source>
        <dbReference type="PDB" id="4PO7"/>
    </source>
</evidence>
<organism>
    <name type="scientific">Homo sapiens</name>
    <name type="common">Human</name>
    <dbReference type="NCBI Taxonomy" id="9606"/>
    <lineage>
        <taxon>Eukaryota</taxon>
        <taxon>Metazoa</taxon>
        <taxon>Chordata</taxon>
        <taxon>Craniata</taxon>
        <taxon>Vertebrata</taxon>
        <taxon>Euteleostomi</taxon>
        <taxon>Mammalia</taxon>
        <taxon>Eutheria</taxon>
        <taxon>Euarchontoglires</taxon>
        <taxon>Primates</taxon>
        <taxon>Haplorrhini</taxon>
        <taxon>Catarrhini</taxon>
        <taxon>Hominidae</taxon>
        <taxon>Homo</taxon>
    </lineage>
</organism>